<reference key="1">
    <citation type="submission" date="2008-05" db="EMBL/GenBank/DDBJ databases">
        <title>Complete sequence of Shigella boydii serotype 18 strain BS512.</title>
        <authorList>
            <person name="Rasko D.A."/>
            <person name="Rosovitz M."/>
            <person name="Maurelli A.T."/>
            <person name="Myers G."/>
            <person name="Seshadri R."/>
            <person name="Cer R."/>
            <person name="Jiang L."/>
            <person name="Ravel J."/>
            <person name="Sebastian Y."/>
        </authorList>
    </citation>
    <scope>NUCLEOTIDE SEQUENCE [LARGE SCALE GENOMIC DNA]</scope>
    <source>
        <strain>CDC 3083-94 / BS512</strain>
    </source>
</reference>
<organism>
    <name type="scientific">Shigella boydii serotype 18 (strain CDC 3083-94 / BS512)</name>
    <dbReference type="NCBI Taxonomy" id="344609"/>
    <lineage>
        <taxon>Bacteria</taxon>
        <taxon>Pseudomonadati</taxon>
        <taxon>Pseudomonadota</taxon>
        <taxon>Gammaproteobacteria</taxon>
        <taxon>Enterobacterales</taxon>
        <taxon>Enterobacteriaceae</taxon>
        <taxon>Shigella</taxon>
    </lineage>
</organism>
<gene>
    <name evidence="1" type="primary">ihfA</name>
    <name evidence="1" type="synonym">himA</name>
    <name type="ordered locus">SbBS512_E1954</name>
</gene>
<dbReference type="EMBL" id="CP001063">
    <property type="protein sequence ID" value="ACD08686.1"/>
    <property type="molecule type" value="Genomic_DNA"/>
</dbReference>
<dbReference type="RefSeq" id="WP_001229265.1">
    <property type="nucleotide sequence ID" value="NC_010658.1"/>
</dbReference>
<dbReference type="SMR" id="B2U390"/>
<dbReference type="STRING" id="344609.SbBS512_E1954"/>
<dbReference type="GeneID" id="93775925"/>
<dbReference type="KEGG" id="sbc:SbBS512_E1954"/>
<dbReference type="HOGENOM" id="CLU_105066_1_3_6"/>
<dbReference type="Proteomes" id="UP000001030">
    <property type="component" value="Chromosome"/>
</dbReference>
<dbReference type="GO" id="GO:0005829">
    <property type="term" value="C:cytosol"/>
    <property type="evidence" value="ECO:0007669"/>
    <property type="project" value="TreeGrafter"/>
</dbReference>
<dbReference type="GO" id="GO:0003677">
    <property type="term" value="F:DNA binding"/>
    <property type="evidence" value="ECO:0007669"/>
    <property type="project" value="UniProtKB-UniRule"/>
</dbReference>
<dbReference type="GO" id="GO:0030527">
    <property type="term" value="F:structural constituent of chromatin"/>
    <property type="evidence" value="ECO:0007669"/>
    <property type="project" value="InterPro"/>
</dbReference>
<dbReference type="GO" id="GO:0006310">
    <property type="term" value="P:DNA recombination"/>
    <property type="evidence" value="ECO:0007669"/>
    <property type="project" value="UniProtKB-UniRule"/>
</dbReference>
<dbReference type="GO" id="GO:0009893">
    <property type="term" value="P:positive regulation of metabolic process"/>
    <property type="evidence" value="ECO:0007669"/>
    <property type="project" value="UniProtKB-ARBA"/>
</dbReference>
<dbReference type="GO" id="GO:0006355">
    <property type="term" value="P:regulation of DNA-templated transcription"/>
    <property type="evidence" value="ECO:0007669"/>
    <property type="project" value="UniProtKB-UniRule"/>
</dbReference>
<dbReference type="GO" id="GO:0006417">
    <property type="term" value="P:regulation of translation"/>
    <property type="evidence" value="ECO:0007669"/>
    <property type="project" value="UniProtKB-UniRule"/>
</dbReference>
<dbReference type="CDD" id="cd13835">
    <property type="entry name" value="IHF_A"/>
    <property type="match status" value="1"/>
</dbReference>
<dbReference type="FunFam" id="4.10.520.10:FF:000002">
    <property type="entry name" value="Integration host factor subunit alpha"/>
    <property type="match status" value="1"/>
</dbReference>
<dbReference type="Gene3D" id="4.10.520.10">
    <property type="entry name" value="IHF-like DNA-binding proteins"/>
    <property type="match status" value="1"/>
</dbReference>
<dbReference type="HAMAP" id="MF_00380">
    <property type="entry name" value="IHF_alpha"/>
    <property type="match status" value="1"/>
</dbReference>
<dbReference type="InterPro" id="IPR000119">
    <property type="entry name" value="Hist_DNA-bd"/>
</dbReference>
<dbReference type="InterPro" id="IPR020816">
    <property type="entry name" value="Histone-like_DNA-bd_CS"/>
</dbReference>
<dbReference type="InterPro" id="IPR010992">
    <property type="entry name" value="IHF-like_DNA-bd_dom_sf"/>
</dbReference>
<dbReference type="InterPro" id="IPR005684">
    <property type="entry name" value="IHF_alpha"/>
</dbReference>
<dbReference type="NCBIfam" id="TIGR00987">
    <property type="entry name" value="himA"/>
    <property type="match status" value="1"/>
</dbReference>
<dbReference type="NCBIfam" id="NF001401">
    <property type="entry name" value="PRK00285.1"/>
    <property type="match status" value="1"/>
</dbReference>
<dbReference type="PANTHER" id="PTHR33175">
    <property type="entry name" value="DNA-BINDING PROTEIN HU"/>
    <property type="match status" value="1"/>
</dbReference>
<dbReference type="PANTHER" id="PTHR33175:SF2">
    <property type="entry name" value="INTEGRATION HOST FACTOR SUBUNIT ALPHA"/>
    <property type="match status" value="1"/>
</dbReference>
<dbReference type="Pfam" id="PF00216">
    <property type="entry name" value="Bac_DNA_binding"/>
    <property type="match status" value="1"/>
</dbReference>
<dbReference type="PRINTS" id="PR01727">
    <property type="entry name" value="DNABINDINGHU"/>
</dbReference>
<dbReference type="SMART" id="SM00411">
    <property type="entry name" value="BHL"/>
    <property type="match status" value="1"/>
</dbReference>
<dbReference type="SUPFAM" id="SSF47729">
    <property type="entry name" value="IHF-like DNA-binding proteins"/>
    <property type="match status" value="1"/>
</dbReference>
<dbReference type="PROSITE" id="PS00045">
    <property type="entry name" value="HISTONE_LIKE"/>
    <property type="match status" value="1"/>
</dbReference>
<accession>B2U390</accession>
<protein>
    <recommendedName>
        <fullName evidence="1">Integration host factor subunit alpha</fullName>
        <shortName evidence="1">IHF-alpha</shortName>
    </recommendedName>
</protein>
<proteinExistence type="inferred from homology"/>
<keyword id="KW-0233">DNA recombination</keyword>
<keyword id="KW-0238">DNA-binding</keyword>
<keyword id="KW-1185">Reference proteome</keyword>
<keyword id="KW-0804">Transcription</keyword>
<keyword id="KW-0805">Transcription regulation</keyword>
<keyword id="KW-0810">Translation regulation</keyword>
<comment type="function">
    <text evidence="1">This protein is one of the two subunits of integration host factor, a specific DNA-binding protein that functions in genetic recombination as well as in transcriptional and translational control.</text>
</comment>
<comment type="subunit">
    <text evidence="1">Heterodimer of an alpha and a beta chain.</text>
</comment>
<comment type="similarity">
    <text evidence="1">Belongs to the bacterial histone-like protein family.</text>
</comment>
<feature type="chain" id="PRO_1000122169" description="Integration host factor subunit alpha">
    <location>
        <begin position="1"/>
        <end position="99"/>
    </location>
</feature>
<feature type="region of interest" description="Disordered" evidence="2">
    <location>
        <begin position="49"/>
        <end position="73"/>
    </location>
</feature>
<evidence type="ECO:0000255" key="1">
    <source>
        <dbReference type="HAMAP-Rule" id="MF_00380"/>
    </source>
</evidence>
<evidence type="ECO:0000256" key="2">
    <source>
        <dbReference type="SAM" id="MobiDB-lite"/>
    </source>
</evidence>
<name>IHFA_SHIB3</name>
<sequence>MALTKAEMSEYLFDKLGLSKRDAKELVELFFEEIRRALENGEQVKLSGFGNFDLRDKNQRPGRNPKTGEDIPITARRVVTFRPGQKLKSRVENASPKDE</sequence>